<keyword id="KW-0963">Cytoplasm</keyword>
<keyword id="KW-0312">Gluconeogenesis</keyword>
<keyword id="KW-0324">Glycolysis</keyword>
<keyword id="KW-0413">Isomerase</keyword>
<organism>
    <name type="scientific">Borreliella burgdorferi (strain ZS7)</name>
    <name type="common">Borrelia burgdorferi</name>
    <dbReference type="NCBI Taxonomy" id="445985"/>
    <lineage>
        <taxon>Bacteria</taxon>
        <taxon>Pseudomonadati</taxon>
        <taxon>Spirochaetota</taxon>
        <taxon>Spirochaetia</taxon>
        <taxon>Spirochaetales</taxon>
        <taxon>Borreliaceae</taxon>
        <taxon>Borreliella</taxon>
    </lineage>
</organism>
<name>TPIS_BORBZ</name>
<gene>
    <name evidence="1" type="primary">tpiA</name>
    <name type="ordered locus">BbuZS7_0056</name>
</gene>
<accession>B7J0Z1</accession>
<reference key="1">
    <citation type="journal article" date="2011" name="J. Bacteriol.">
        <title>Whole-genome sequences of thirteen isolates of Borrelia burgdorferi.</title>
        <authorList>
            <person name="Schutzer S.E."/>
            <person name="Fraser-Liggett C.M."/>
            <person name="Casjens S.R."/>
            <person name="Qiu W.G."/>
            <person name="Dunn J.J."/>
            <person name="Mongodin E.F."/>
            <person name="Luft B.J."/>
        </authorList>
    </citation>
    <scope>NUCLEOTIDE SEQUENCE [LARGE SCALE GENOMIC DNA]</scope>
    <source>
        <strain>ZS7</strain>
    </source>
</reference>
<evidence type="ECO:0000255" key="1">
    <source>
        <dbReference type="HAMAP-Rule" id="MF_00147"/>
    </source>
</evidence>
<comment type="function">
    <text evidence="1">Involved in the gluconeogenesis. Catalyzes stereospecifically the conversion of dihydroxyacetone phosphate (DHAP) to D-glyceraldehyde-3-phosphate (G3P).</text>
</comment>
<comment type="catalytic activity">
    <reaction evidence="1">
        <text>D-glyceraldehyde 3-phosphate = dihydroxyacetone phosphate</text>
        <dbReference type="Rhea" id="RHEA:18585"/>
        <dbReference type="ChEBI" id="CHEBI:57642"/>
        <dbReference type="ChEBI" id="CHEBI:59776"/>
        <dbReference type="EC" id="5.3.1.1"/>
    </reaction>
</comment>
<comment type="pathway">
    <text evidence="1">Carbohydrate biosynthesis; gluconeogenesis.</text>
</comment>
<comment type="pathway">
    <text evidence="1">Carbohydrate degradation; glycolysis; D-glyceraldehyde 3-phosphate from glycerone phosphate: step 1/1.</text>
</comment>
<comment type="subunit">
    <text evidence="1">Homodimer.</text>
</comment>
<comment type="subcellular location">
    <subcellularLocation>
        <location evidence="1">Cytoplasm</location>
    </subcellularLocation>
</comment>
<comment type="similarity">
    <text evidence="1">Belongs to the triosephosphate isomerase family.</text>
</comment>
<sequence>MRKTFLAGNWKMHYTSAEASIVAKKIATEVKTLKDDVVIMITPPFTALSKVSECIKGSNILLGAQNMSYMESGARTSEISPSMLLEFGVEYVILGHSECRLYLAETDEIINKKILAGLKHPFKYLILCVGETLDERDSGKTLEVVLNQVKKGLNCVSESDIQRIILAYEPVWAIGTGKTATKEEAEEVHKAIRLEITKLYSKSASDNIIIQYGGSVNSNNVKELMNEPNIDGALIGGASLKAESFLSIINNVL</sequence>
<protein>
    <recommendedName>
        <fullName evidence="1">Triosephosphate isomerase</fullName>
        <shortName evidence="1">TIM</shortName>
        <shortName evidence="1">TPI</shortName>
        <ecNumber evidence="1">5.3.1.1</ecNumber>
    </recommendedName>
    <alternativeName>
        <fullName evidence="1">Triose-phosphate isomerase</fullName>
    </alternativeName>
</protein>
<dbReference type="EC" id="5.3.1.1" evidence="1"/>
<dbReference type="EMBL" id="CP001205">
    <property type="protein sequence ID" value="ACK75039.1"/>
    <property type="molecule type" value="Genomic_DNA"/>
</dbReference>
<dbReference type="RefSeq" id="WP_002658317.1">
    <property type="nucleotide sequence ID" value="NC_011728.1"/>
</dbReference>
<dbReference type="SMR" id="B7J0Z1"/>
<dbReference type="GeneID" id="56568162"/>
<dbReference type="KEGG" id="bbz:BbuZS7_0056"/>
<dbReference type="HOGENOM" id="CLU_024251_2_3_12"/>
<dbReference type="UniPathway" id="UPA00109">
    <property type="reaction ID" value="UER00189"/>
</dbReference>
<dbReference type="UniPathway" id="UPA00138"/>
<dbReference type="Proteomes" id="UP000006901">
    <property type="component" value="Chromosome"/>
</dbReference>
<dbReference type="GO" id="GO:0005829">
    <property type="term" value="C:cytosol"/>
    <property type="evidence" value="ECO:0007669"/>
    <property type="project" value="TreeGrafter"/>
</dbReference>
<dbReference type="GO" id="GO:0004807">
    <property type="term" value="F:triose-phosphate isomerase activity"/>
    <property type="evidence" value="ECO:0007669"/>
    <property type="project" value="UniProtKB-UniRule"/>
</dbReference>
<dbReference type="GO" id="GO:0006094">
    <property type="term" value="P:gluconeogenesis"/>
    <property type="evidence" value="ECO:0007669"/>
    <property type="project" value="UniProtKB-UniRule"/>
</dbReference>
<dbReference type="GO" id="GO:0046166">
    <property type="term" value="P:glyceraldehyde-3-phosphate biosynthetic process"/>
    <property type="evidence" value="ECO:0007669"/>
    <property type="project" value="TreeGrafter"/>
</dbReference>
<dbReference type="GO" id="GO:0019563">
    <property type="term" value="P:glycerol catabolic process"/>
    <property type="evidence" value="ECO:0007669"/>
    <property type="project" value="TreeGrafter"/>
</dbReference>
<dbReference type="GO" id="GO:0006096">
    <property type="term" value="P:glycolytic process"/>
    <property type="evidence" value="ECO:0007669"/>
    <property type="project" value="UniProtKB-UniRule"/>
</dbReference>
<dbReference type="CDD" id="cd00311">
    <property type="entry name" value="TIM"/>
    <property type="match status" value="1"/>
</dbReference>
<dbReference type="FunFam" id="3.20.20.70:FF:000016">
    <property type="entry name" value="Triosephosphate isomerase"/>
    <property type="match status" value="1"/>
</dbReference>
<dbReference type="Gene3D" id="3.20.20.70">
    <property type="entry name" value="Aldolase class I"/>
    <property type="match status" value="1"/>
</dbReference>
<dbReference type="HAMAP" id="MF_00147_B">
    <property type="entry name" value="TIM_B"/>
    <property type="match status" value="1"/>
</dbReference>
<dbReference type="InterPro" id="IPR013785">
    <property type="entry name" value="Aldolase_TIM"/>
</dbReference>
<dbReference type="InterPro" id="IPR035990">
    <property type="entry name" value="TIM_sf"/>
</dbReference>
<dbReference type="InterPro" id="IPR022896">
    <property type="entry name" value="TrioseP_Isoase_bac/euk"/>
</dbReference>
<dbReference type="InterPro" id="IPR000652">
    <property type="entry name" value="Triosephosphate_isomerase"/>
</dbReference>
<dbReference type="InterPro" id="IPR020861">
    <property type="entry name" value="Triosephosphate_isomerase_AS"/>
</dbReference>
<dbReference type="NCBIfam" id="TIGR00419">
    <property type="entry name" value="tim"/>
    <property type="match status" value="1"/>
</dbReference>
<dbReference type="PANTHER" id="PTHR21139">
    <property type="entry name" value="TRIOSEPHOSPHATE ISOMERASE"/>
    <property type="match status" value="1"/>
</dbReference>
<dbReference type="PANTHER" id="PTHR21139:SF42">
    <property type="entry name" value="TRIOSEPHOSPHATE ISOMERASE"/>
    <property type="match status" value="1"/>
</dbReference>
<dbReference type="Pfam" id="PF00121">
    <property type="entry name" value="TIM"/>
    <property type="match status" value="1"/>
</dbReference>
<dbReference type="SUPFAM" id="SSF51351">
    <property type="entry name" value="Triosephosphate isomerase (TIM)"/>
    <property type="match status" value="1"/>
</dbReference>
<dbReference type="PROSITE" id="PS00171">
    <property type="entry name" value="TIM_1"/>
    <property type="match status" value="1"/>
</dbReference>
<dbReference type="PROSITE" id="PS51440">
    <property type="entry name" value="TIM_2"/>
    <property type="match status" value="1"/>
</dbReference>
<feature type="chain" id="PRO_1000117999" description="Triosephosphate isomerase">
    <location>
        <begin position="1"/>
        <end position="253"/>
    </location>
</feature>
<feature type="active site" description="Electrophile" evidence="1">
    <location>
        <position position="96"/>
    </location>
</feature>
<feature type="active site" description="Proton acceptor" evidence="1">
    <location>
        <position position="169"/>
    </location>
</feature>
<feature type="binding site" evidence="1">
    <location>
        <begin position="9"/>
        <end position="11"/>
    </location>
    <ligand>
        <name>substrate</name>
    </ligand>
</feature>
<feature type="binding site" evidence="1">
    <location>
        <position position="175"/>
    </location>
    <ligand>
        <name>substrate</name>
    </ligand>
</feature>
<feature type="binding site" evidence="1">
    <location>
        <position position="215"/>
    </location>
    <ligand>
        <name>substrate</name>
    </ligand>
</feature>
<feature type="binding site" evidence="1">
    <location>
        <begin position="236"/>
        <end position="237"/>
    </location>
    <ligand>
        <name>substrate</name>
    </ligand>
</feature>
<proteinExistence type="inferred from homology"/>